<accession>P47294</accession>
<organism>
    <name type="scientific">Mycoplasma genitalium (strain ATCC 33530 / DSM 19775 / NCTC 10195 / G37)</name>
    <name type="common">Mycoplasmoides genitalium</name>
    <dbReference type="NCBI Taxonomy" id="243273"/>
    <lineage>
        <taxon>Bacteria</taxon>
        <taxon>Bacillati</taxon>
        <taxon>Mycoplasmatota</taxon>
        <taxon>Mycoplasmoidales</taxon>
        <taxon>Mycoplasmoidaceae</taxon>
        <taxon>Mycoplasmoides</taxon>
    </lineage>
</organism>
<proteinExistence type="inferred from homology"/>
<name>SRP54_MYCGE</name>
<comment type="function">
    <text evidence="1">Involved in targeting and insertion of nascent membrane proteins into the cytoplasmic membrane. Binds to the hydrophobic signal sequence of the ribosome-nascent chain (RNC) as it emerges from the ribosomes. The SRP-RNC complex is then targeted to the cytoplasmic membrane where it interacts with the SRP receptor FtsY.</text>
</comment>
<comment type="catalytic activity">
    <reaction evidence="1">
        <text>GTP + H2O = GDP + phosphate + H(+)</text>
        <dbReference type="Rhea" id="RHEA:19669"/>
        <dbReference type="ChEBI" id="CHEBI:15377"/>
        <dbReference type="ChEBI" id="CHEBI:15378"/>
        <dbReference type="ChEBI" id="CHEBI:37565"/>
        <dbReference type="ChEBI" id="CHEBI:43474"/>
        <dbReference type="ChEBI" id="CHEBI:58189"/>
        <dbReference type="EC" id="3.6.5.4"/>
    </reaction>
</comment>
<comment type="subunit">
    <text evidence="1">Part of the signal recognition particle protein translocation system, which is composed of SRP and FtsY.</text>
</comment>
<comment type="subcellular location">
    <subcellularLocation>
        <location evidence="1">Cytoplasm</location>
    </subcellularLocation>
    <text evidence="1">The SRP-RNC complex is targeted to the cytoplasmic membrane.</text>
</comment>
<comment type="domain">
    <text evidence="1">Composed of three domains: the N-terminal N domain, which is responsible for interactions with the ribosome, the central G domain, which binds GTP, and the C-terminal M domain, which binds the RNA and the signal sequence of the RNC.</text>
</comment>
<comment type="similarity">
    <text evidence="1">Belongs to the GTP-binding SRP family. SRP54 subfamily.</text>
</comment>
<gene>
    <name evidence="1" type="primary">ffh</name>
    <name type="ordered locus">MG048</name>
</gene>
<feature type="chain" id="PRO_0000101159" description="Signal recognition particle protein">
    <location>
        <begin position="1"/>
        <end position="446"/>
    </location>
</feature>
<feature type="binding site" evidence="1">
    <location>
        <begin position="106"/>
        <end position="113"/>
    </location>
    <ligand>
        <name>GTP</name>
        <dbReference type="ChEBI" id="CHEBI:37565"/>
    </ligand>
</feature>
<feature type="binding site" evidence="1">
    <location>
        <begin position="188"/>
        <end position="192"/>
    </location>
    <ligand>
        <name>GTP</name>
        <dbReference type="ChEBI" id="CHEBI:37565"/>
    </ligand>
</feature>
<feature type="binding site" evidence="1">
    <location>
        <begin position="246"/>
        <end position="249"/>
    </location>
    <ligand>
        <name>GTP</name>
        <dbReference type="ChEBI" id="CHEBI:37565"/>
    </ligand>
</feature>
<evidence type="ECO:0000255" key="1">
    <source>
        <dbReference type="HAMAP-Rule" id="MF_00306"/>
    </source>
</evidence>
<sequence length="446" mass="50199">MFKAMLSSIVMRTMQKKINAQTITEKDVELVLKEIRIALLDADVNLLVVKNFIKAIRDKTVGQTIEPGQDLQKSLLKTIKTELINILSQPNQELNEKRPLKIMMVGLQGSGKTTTCGKLAYWLEKKYKQKTMLVGLDIYRPAAIEQLETLSQQTNSVFFAQGTQPVAKTTKAALSAFKTAKCQTIICDTAGRLQTNETLMDELVSVKNELNPDEIIMVVDGLSGQEIINVAQTFHKRLKLTGFIISKLDSDARAGAALSLASLLQVPIKLIGVSEKLDGLEQFHPERIANRILGLGDVMSLVEKAEQVFDKKDLTKTISKMFLGKMDLEDLLIYMQQMHKMGSVSSLIKMLPANFSVSEENAELIENKIELWKVLINSMTREERRHPKLINRDPNRKQRIIKGSGRKMDELNKLMKEWNKMQLKATEMGKLLKTGSNPFGGFGQFF</sequence>
<keyword id="KW-0963">Cytoplasm</keyword>
<keyword id="KW-0342">GTP-binding</keyword>
<keyword id="KW-0378">Hydrolase</keyword>
<keyword id="KW-0547">Nucleotide-binding</keyword>
<keyword id="KW-1185">Reference proteome</keyword>
<keyword id="KW-0687">Ribonucleoprotein</keyword>
<keyword id="KW-0694">RNA-binding</keyword>
<keyword id="KW-0733">Signal recognition particle</keyword>
<protein>
    <recommendedName>
        <fullName evidence="1">Signal recognition particle protein</fullName>
        <ecNumber evidence="1">3.6.5.4</ecNumber>
    </recommendedName>
    <alternativeName>
        <fullName evidence="1">Fifty-four homolog</fullName>
    </alternativeName>
</protein>
<reference key="1">
    <citation type="journal article" date="1995" name="Science">
        <title>The minimal gene complement of Mycoplasma genitalium.</title>
        <authorList>
            <person name="Fraser C.M."/>
            <person name="Gocayne J.D."/>
            <person name="White O."/>
            <person name="Adams M.D."/>
            <person name="Clayton R.A."/>
            <person name="Fleischmann R.D."/>
            <person name="Bult C.J."/>
            <person name="Kerlavage A.R."/>
            <person name="Sutton G.G."/>
            <person name="Kelley J.M."/>
            <person name="Fritchman J.L."/>
            <person name="Weidman J.F."/>
            <person name="Small K.V."/>
            <person name="Sandusky M."/>
            <person name="Fuhrmann J.L."/>
            <person name="Nguyen D.T."/>
            <person name="Utterback T.R."/>
            <person name="Saudek D.M."/>
            <person name="Phillips C.A."/>
            <person name="Merrick J.M."/>
            <person name="Tomb J.-F."/>
            <person name="Dougherty B.A."/>
            <person name="Bott K.F."/>
            <person name="Hu P.-C."/>
            <person name="Lucier T.S."/>
            <person name="Peterson S.N."/>
            <person name="Smith H.O."/>
            <person name="Hutchison C.A. III"/>
            <person name="Venter J.C."/>
        </authorList>
    </citation>
    <scope>NUCLEOTIDE SEQUENCE [LARGE SCALE GENOMIC DNA]</scope>
    <source>
        <strain>ATCC 33530 / DSM 19775 / NCTC 10195 / G37</strain>
    </source>
</reference>
<dbReference type="EC" id="3.6.5.4" evidence="1"/>
<dbReference type="EMBL" id="L43967">
    <property type="protein sequence ID" value="AAC71264.1"/>
    <property type="molecule type" value="Genomic_DNA"/>
</dbReference>
<dbReference type="PIR" id="C64205">
    <property type="entry name" value="C64205"/>
</dbReference>
<dbReference type="RefSeq" id="WP_010869306.1">
    <property type="nucleotide sequence ID" value="NC_000908.2"/>
</dbReference>
<dbReference type="SMR" id="P47294"/>
<dbReference type="FunCoup" id="P47294">
    <property type="interactions" value="212"/>
</dbReference>
<dbReference type="STRING" id="243273.MG_048"/>
<dbReference type="GeneID" id="88282164"/>
<dbReference type="KEGG" id="mge:MG_048"/>
<dbReference type="eggNOG" id="COG0541">
    <property type="taxonomic scope" value="Bacteria"/>
</dbReference>
<dbReference type="HOGENOM" id="CLU_009301_6_0_14"/>
<dbReference type="InParanoid" id="P47294"/>
<dbReference type="OrthoDB" id="9804720at2"/>
<dbReference type="Proteomes" id="UP000000807">
    <property type="component" value="Chromosome"/>
</dbReference>
<dbReference type="GO" id="GO:0048500">
    <property type="term" value="C:signal recognition particle"/>
    <property type="evidence" value="ECO:0007669"/>
    <property type="project" value="UniProtKB-UniRule"/>
</dbReference>
<dbReference type="GO" id="GO:0008312">
    <property type="term" value="F:7S RNA binding"/>
    <property type="evidence" value="ECO:0007669"/>
    <property type="project" value="InterPro"/>
</dbReference>
<dbReference type="GO" id="GO:0016887">
    <property type="term" value="F:ATP hydrolysis activity"/>
    <property type="evidence" value="ECO:0007669"/>
    <property type="project" value="InterPro"/>
</dbReference>
<dbReference type="GO" id="GO:0005525">
    <property type="term" value="F:GTP binding"/>
    <property type="evidence" value="ECO:0007669"/>
    <property type="project" value="UniProtKB-UniRule"/>
</dbReference>
<dbReference type="GO" id="GO:0003924">
    <property type="term" value="F:GTPase activity"/>
    <property type="evidence" value="ECO:0007669"/>
    <property type="project" value="UniProtKB-UniRule"/>
</dbReference>
<dbReference type="GO" id="GO:0006614">
    <property type="term" value="P:SRP-dependent cotranslational protein targeting to membrane"/>
    <property type="evidence" value="ECO:0007669"/>
    <property type="project" value="InterPro"/>
</dbReference>
<dbReference type="CDD" id="cd18539">
    <property type="entry name" value="SRP_G"/>
    <property type="match status" value="1"/>
</dbReference>
<dbReference type="Gene3D" id="3.40.50.300">
    <property type="entry name" value="P-loop containing nucleotide triphosphate hydrolases"/>
    <property type="match status" value="1"/>
</dbReference>
<dbReference type="Gene3D" id="1.20.120.140">
    <property type="entry name" value="Signal recognition particle SRP54, nucleotide-binding domain"/>
    <property type="match status" value="1"/>
</dbReference>
<dbReference type="Gene3D" id="1.10.260.30">
    <property type="entry name" value="Signal recognition particle, SRP54 subunit, M-domain"/>
    <property type="match status" value="1"/>
</dbReference>
<dbReference type="HAMAP" id="MF_00306">
    <property type="entry name" value="SRP54"/>
    <property type="match status" value="1"/>
</dbReference>
<dbReference type="InterPro" id="IPR003593">
    <property type="entry name" value="AAA+_ATPase"/>
</dbReference>
<dbReference type="InterPro" id="IPR027417">
    <property type="entry name" value="P-loop_NTPase"/>
</dbReference>
<dbReference type="InterPro" id="IPR036891">
    <property type="entry name" value="Signal_recog_part_SRP54_M_sf"/>
</dbReference>
<dbReference type="InterPro" id="IPR013822">
    <property type="entry name" value="Signal_recog_particl_SRP54_hlx"/>
</dbReference>
<dbReference type="InterPro" id="IPR004125">
    <property type="entry name" value="Signal_recog_particle_SRP54_M"/>
</dbReference>
<dbReference type="InterPro" id="IPR004780">
    <property type="entry name" value="SRP"/>
</dbReference>
<dbReference type="InterPro" id="IPR022941">
    <property type="entry name" value="SRP54"/>
</dbReference>
<dbReference type="InterPro" id="IPR000897">
    <property type="entry name" value="SRP54_GTPase_dom"/>
</dbReference>
<dbReference type="InterPro" id="IPR042101">
    <property type="entry name" value="SRP54_N_sf"/>
</dbReference>
<dbReference type="NCBIfam" id="TIGR00959">
    <property type="entry name" value="ffh"/>
    <property type="match status" value="1"/>
</dbReference>
<dbReference type="PANTHER" id="PTHR11564">
    <property type="entry name" value="SIGNAL RECOGNITION PARTICLE 54K PROTEIN SRP54"/>
    <property type="match status" value="1"/>
</dbReference>
<dbReference type="PANTHER" id="PTHR11564:SF5">
    <property type="entry name" value="SIGNAL RECOGNITION PARTICLE SUBUNIT SRP54"/>
    <property type="match status" value="1"/>
</dbReference>
<dbReference type="Pfam" id="PF00448">
    <property type="entry name" value="SRP54"/>
    <property type="match status" value="1"/>
</dbReference>
<dbReference type="Pfam" id="PF02881">
    <property type="entry name" value="SRP54_N"/>
    <property type="match status" value="1"/>
</dbReference>
<dbReference type="Pfam" id="PF02978">
    <property type="entry name" value="SRP_SPB"/>
    <property type="match status" value="1"/>
</dbReference>
<dbReference type="SMART" id="SM00382">
    <property type="entry name" value="AAA"/>
    <property type="match status" value="1"/>
</dbReference>
<dbReference type="SMART" id="SM00962">
    <property type="entry name" value="SRP54"/>
    <property type="match status" value="1"/>
</dbReference>
<dbReference type="SMART" id="SM00963">
    <property type="entry name" value="SRP54_N"/>
    <property type="match status" value="1"/>
</dbReference>
<dbReference type="SUPFAM" id="SSF52540">
    <property type="entry name" value="P-loop containing nucleoside triphosphate hydrolases"/>
    <property type="match status" value="1"/>
</dbReference>
<dbReference type="SUPFAM" id="SSF47446">
    <property type="entry name" value="Signal peptide-binding domain"/>
    <property type="match status" value="1"/>
</dbReference>
<dbReference type="PROSITE" id="PS00300">
    <property type="entry name" value="SRP54"/>
    <property type="match status" value="1"/>
</dbReference>